<evidence type="ECO:0000255" key="1">
    <source>
        <dbReference type="HAMAP-Rule" id="MF_01183"/>
    </source>
</evidence>
<reference key="1">
    <citation type="journal article" date="2005" name="Proc. Natl. Acad. Sci. U.S.A.">
        <title>Complete genome sequence of Vibrio fischeri: a symbiotic bacterium with pathogenic congeners.</title>
        <authorList>
            <person name="Ruby E.G."/>
            <person name="Urbanowski M."/>
            <person name="Campbell J."/>
            <person name="Dunn A."/>
            <person name="Faini M."/>
            <person name="Gunsalus R."/>
            <person name="Lostroh P."/>
            <person name="Lupp C."/>
            <person name="McCann J."/>
            <person name="Millikan D."/>
            <person name="Schaefer A."/>
            <person name="Stabb E."/>
            <person name="Stevens A."/>
            <person name="Visick K."/>
            <person name="Whistler C."/>
            <person name="Greenberg E.P."/>
        </authorList>
    </citation>
    <scope>NUCLEOTIDE SEQUENCE [LARGE SCALE GENOMIC DNA]</scope>
    <source>
        <strain>ATCC 700601 / ES114</strain>
    </source>
</reference>
<feature type="signal peptide" evidence="1">
    <location>
        <begin position="1"/>
        <end position="22"/>
    </location>
</feature>
<feature type="chain" id="PRO_0000270044" description="Chaperone SurA">
    <location>
        <begin position="23"/>
        <end position="437"/>
    </location>
</feature>
<feature type="domain" description="PpiC 1" evidence="1">
    <location>
        <begin position="173"/>
        <end position="274"/>
    </location>
</feature>
<feature type="domain" description="PpiC 2" evidence="1">
    <location>
        <begin position="283"/>
        <end position="383"/>
    </location>
</feature>
<organism>
    <name type="scientific">Aliivibrio fischeri (strain ATCC 700601 / ES114)</name>
    <name type="common">Vibrio fischeri</name>
    <dbReference type="NCBI Taxonomy" id="312309"/>
    <lineage>
        <taxon>Bacteria</taxon>
        <taxon>Pseudomonadati</taxon>
        <taxon>Pseudomonadota</taxon>
        <taxon>Gammaproteobacteria</taxon>
        <taxon>Vibrionales</taxon>
        <taxon>Vibrionaceae</taxon>
        <taxon>Aliivibrio</taxon>
    </lineage>
</organism>
<proteinExistence type="inferred from homology"/>
<name>SURA_ALIF1</name>
<protein>
    <recommendedName>
        <fullName evidence="1">Chaperone SurA</fullName>
    </recommendedName>
    <alternativeName>
        <fullName evidence="1">Peptidyl-prolyl cis-trans isomerase SurA</fullName>
        <shortName evidence="1">PPIase SurA</shortName>
        <ecNumber evidence="1">5.2.1.8</ecNumber>
    </alternativeName>
    <alternativeName>
        <fullName evidence="1">Rotamase SurA</fullName>
    </alternativeName>
</protein>
<accession>Q5E863</accession>
<dbReference type="EC" id="5.2.1.8" evidence="1"/>
<dbReference type="EMBL" id="CP000020">
    <property type="protein sequence ID" value="AAW84783.1"/>
    <property type="molecule type" value="Genomic_DNA"/>
</dbReference>
<dbReference type="RefSeq" id="WP_005417328.1">
    <property type="nucleotide sequence ID" value="NZ_CAWLES010000001.1"/>
</dbReference>
<dbReference type="RefSeq" id="YP_203671.1">
    <property type="nucleotide sequence ID" value="NC_006840.2"/>
</dbReference>
<dbReference type="SMR" id="Q5E863"/>
<dbReference type="STRING" id="312309.VF_0288"/>
<dbReference type="EnsemblBacteria" id="AAW84783">
    <property type="protein sequence ID" value="AAW84783"/>
    <property type="gene ID" value="VF_0288"/>
</dbReference>
<dbReference type="GeneID" id="54162908"/>
<dbReference type="KEGG" id="vfi:VF_0288"/>
<dbReference type="PATRIC" id="fig|312309.11.peg.282"/>
<dbReference type="eggNOG" id="COG0760">
    <property type="taxonomic scope" value="Bacteria"/>
</dbReference>
<dbReference type="HOGENOM" id="CLU_034646_11_0_6"/>
<dbReference type="OrthoDB" id="14196at2"/>
<dbReference type="Proteomes" id="UP000000537">
    <property type="component" value="Chromosome I"/>
</dbReference>
<dbReference type="GO" id="GO:0030288">
    <property type="term" value="C:outer membrane-bounded periplasmic space"/>
    <property type="evidence" value="ECO:0007669"/>
    <property type="project" value="InterPro"/>
</dbReference>
<dbReference type="GO" id="GO:0042277">
    <property type="term" value="F:peptide binding"/>
    <property type="evidence" value="ECO:0007669"/>
    <property type="project" value="InterPro"/>
</dbReference>
<dbReference type="GO" id="GO:0003755">
    <property type="term" value="F:peptidyl-prolyl cis-trans isomerase activity"/>
    <property type="evidence" value="ECO:0007669"/>
    <property type="project" value="UniProtKB-UniRule"/>
</dbReference>
<dbReference type="GO" id="GO:0051082">
    <property type="term" value="F:unfolded protein binding"/>
    <property type="evidence" value="ECO:0007669"/>
    <property type="project" value="UniProtKB-UniRule"/>
</dbReference>
<dbReference type="GO" id="GO:0043165">
    <property type="term" value="P:Gram-negative-bacterium-type cell outer membrane assembly"/>
    <property type="evidence" value="ECO:0007669"/>
    <property type="project" value="InterPro"/>
</dbReference>
<dbReference type="GO" id="GO:0006457">
    <property type="term" value="P:protein folding"/>
    <property type="evidence" value="ECO:0007669"/>
    <property type="project" value="UniProtKB-UniRule"/>
</dbReference>
<dbReference type="GO" id="GO:0050821">
    <property type="term" value="P:protein stabilization"/>
    <property type="evidence" value="ECO:0007669"/>
    <property type="project" value="InterPro"/>
</dbReference>
<dbReference type="Gene3D" id="3.10.50.40">
    <property type="match status" value="2"/>
</dbReference>
<dbReference type="Gene3D" id="1.10.4030.10">
    <property type="entry name" value="Porin chaperone SurA, peptide-binding domain"/>
    <property type="match status" value="2"/>
</dbReference>
<dbReference type="HAMAP" id="MF_01183">
    <property type="entry name" value="Chaperone_SurA"/>
    <property type="match status" value="1"/>
</dbReference>
<dbReference type="InterPro" id="IPR050280">
    <property type="entry name" value="OMP_Chaperone_SurA"/>
</dbReference>
<dbReference type="InterPro" id="IPR046357">
    <property type="entry name" value="PPIase_dom_sf"/>
</dbReference>
<dbReference type="InterPro" id="IPR000297">
    <property type="entry name" value="PPIase_PpiC"/>
</dbReference>
<dbReference type="InterPro" id="IPR023034">
    <property type="entry name" value="PPIase_SurA"/>
</dbReference>
<dbReference type="InterPro" id="IPR015391">
    <property type="entry name" value="SurA_N"/>
</dbReference>
<dbReference type="InterPro" id="IPR027304">
    <property type="entry name" value="Trigger_fact/SurA_dom_sf"/>
</dbReference>
<dbReference type="NCBIfam" id="NF008038">
    <property type="entry name" value="PRK10770.1"/>
    <property type="match status" value="1"/>
</dbReference>
<dbReference type="PANTHER" id="PTHR47637">
    <property type="entry name" value="CHAPERONE SURA"/>
    <property type="match status" value="1"/>
</dbReference>
<dbReference type="PANTHER" id="PTHR47637:SF1">
    <property type="entry name" value="CHAPERONE SURA"/>
    <property type="match status" value="1"/>
</dbReference>
<dbReference type="Pfam" id="PF13616">
    <property type="entry name" value="Rotamase_3"/>
    <property type="match status" value="2"/>
</dbReference>
<dbReference type="Pfam" id="PF09312">
    <property type="entry name" value="SurA_N"/>
    <property type="match status" value="1"/>
</dbReference>
<dbReference type="SUPFAM" id="SSF54534">
    <property type="entry name" value="FKBP-like"/>
    <property type="match status" value="2"/>
</dbReference>
<dbReference type="SUPFAM" id="SSF109998">
    <property type="entry name" value="Triger factor/SurA peptide-binding domain-like"/>
    <property type="match status" value="1"/>
</dbReference>
<dbReference type="PROSITE" id="PS50198">
    <property type="entry name" value="PPIC_PPIASE_2"/>
    <property type="match status" value="2"/>
</dbReference>
<sequence>MKNWKFPLISTLLLLLTINVHAAPVELDRVVAIVDEGVVLQSDIDTSLKTVKINAQEKGQPLPDEAVLREQVLEKLIVDTIQSQQAEKMGIRIDDTRLEAALNDIAKENNMTLAQLQQKTAAQGLPYANFREQIRKEIAASEARNAQVRRRINILPQEVESLAQLLAEETQATVQYKISHIQLRVEDGATQADKEALEKQAEDLTERLKQGADFATMAYTYSKGPKALQGGDWGWMRKEEMPTIFADQITGQGKNSIIGPFRSGVGFHILKIDDVKGLETVAVTEVNARHILIKTSVIMSDEGAQRLLNTIIDDIKSGKETFADMAQRYSQDPGSAANDGELGFQTPDLYVPEFKHQVETLPVGQISAPFKTVHGWHIAEVLERRQVDRTDAAMKNKAYRILLNRKFNEEAGAWLQEIRASAYVEILQDDDGEDDNE</sequence>
<keyword id="KW-0143">Chaperone</keyword>
<keyword id="KW-0413">Isomerase</keyword>
<keyword id="KW-0574">Periplasm</keyword>
<keyword id="KW-1185">Reference proteome</keyword>
<keyword id="KW-0677">Repeat</keyword>
<keyword id="KW-0697">Rotamase</keyword>
<keyword id="KW-0732">Signal</keyword>
<comment type="function">
    <text evidence="1">Chaperone involved in the correct folding and assembly of outer membrane proteins. Recognizes specific patterns of aromatic residues and the orientation of their side chains, which are found more frequently in integral outer membrane proteins. May act in both early periplasmic and late outer membrane-associated steps of protein maturation.</text>
</comment>
<comment type="catalytic activity">
    <reaction evidence="1">
        <text>[protein]-peptidylproline (omega=180) = [protein]-peptidylproline (omega=0)</text>
        <dbReference type="Rhea" id="RHEA:16237"/>
        <dbReference type="Rhea" id="RHEA-COMP:10747"/>
        <dbReference type="Rhea" id="RHEA-COMP:10748"/>
        <dbReference type="ChEBI" id="CHEBI:83833"/>
        <dbReference type="ChEBI" id="CHEBI:83834"/>
        <dbReference type="EC" id="5.2.1.8"/>
    </reaction>
</comment>
<comment type="subcellular location">
    <subcellularLocation>
        <location evidence="1">Periplasm</location>
    </subcellularLocation>
    <text evidence="1">Is capable of associating with the outer membrane.</text>
</comment>
<comment type="domain">
    <text evidence="1">The PPIase activity resides only in the second parvulin domain. The N-terminal region and the C-terminal tail are necessary and sufficient for the chaperone activity of SurA. The PPIase activity is dispensable for SurA to function as a chaperone. The N-terminal region and the C-terminal tail are also required for porin recognition.</text>
</comment>
<gene>
    <name evidence="1" type="primary">surA</name>
    <name type="ordered locus">VF_0288</name>
</gene>